<gene>
    <name type="primary">SAMC2</name>
    <name type="ordered locus">At1g34065</name>
    <name type="ORF">F12G12.11</name>
</gene>
<evidence type="ECO:0000255" key="1"/>
<evidence type="ECO:0000269" key="2">
    <source>
    </source>
</evidence>
<evidence type="ECO:0000305" key="3"/>
<comment type="function">
    <text>Probable S-adenosylmethionine (SAM) transporter able to catalyze both uniport and exchange reactions through membranes.</text>
</comment>
<comment type="subcellular location">
    <subcellularLocation>
        <location evidence="3">Plastid</location>
        <location evidence="3">Chloroplast membrane</location>
        <topology evidence="3">Multi-pass membrane protein</topology>
    </subcellularLocation>
</comment>
<comment type="tissue specificity">
    <text evidence="2">Expressed at low levels in seedlings, leaves, flowers, stems and roots.</text>
</comment>
<comment type="similarity">
    <text evidence="3">Belongs to the mitochondrial carrier (TC 2.A.29) family.</text>
</comment>
<comment type="sequence caution" evidence="3">
    <conflict type="erroneous gene model prediction">
        <sequence resource="EMBL-CDS" id="AAG12530"/>
    </conflict>
</comment>
<comment type="sequence caution" evidence="3">
    <conflict type="erroneous initiation">
        <sequence resource="EMBL-CDS" id="AAY34159"/>
    </conflict>
    <text>Truncated N-terminus.</text>
</comment>
<dbReference type="EMBL" id="AC015446">
    <property type="protein sequence ID" value="AAG12530.1"/>
    <property type="status" value="ALT_SEQ"/>
    <property type="molecule type" value="Genomic_DNA"/>
</dbReference>
<dbReference type="EMBL" id="CP002684">
    <property type="protein sequence ID" value="AEE31668.1"/>
    <property type="molecule type" value="Genomic_DNA"/>
</dbReference>
<dbReference type="EMBL" id="BT022098">
    <property type="protein sequence ID" value="AAY34159.1"/>
    <property type="status" value="ALT_INIT"/>
    <property type="molecule type" value="mRNA"/>
</dbReference>
<dbReference type="EMBL" id="AM260491">
    <property type="protein sequence ID" value="CAJ91124.1"/>
    <property type="molecule type" value="mRNA"/>
</dbReference>
<dbReference type="PIR" id="F86464">
    <property type="entry name" value="F86464"/>
</dbReference>
<dbReference type="RefSeq" id="NP_564436.4">
    <property type="nucleotide sequence ID" value="NM_103129.5"/>
</dbReference>
<dbReference type="SMR" id="F4HT41"/>
<dbReference type="FunCoup" id="F4HT41">
    <property type="interactions" value="3310"/>
</dbReference>
<dbReference type="STRING" id="3702.F4HT41"/>
<dbReference type="iPTMnet" id="F4HT41"/>
<dbReference type="PaxDb" id="3702-AT1G34065.1"/>
<dbReference type="ProteomicsDB" id="232840"/>
<dbReference type="EnsemblPlants" id="AT1G34065.1">
    <property type="protein sequence ID" value="AT1G34065.1"/>
    <property type="gene ID" value="AT1G34065"/>
</dbReference>
<dbReference type="GeneID" id="840304"/>
<dbReference type="Gramene" id="AT1G34065.1">
    <property type="protein sequence ID" value="AT1G34065.1"/>
    <property type="gene ID" value="AT1G34065"/>
</dbReference>
<dbReference type="KEGG" id="ath:AT1G34065"/>
<dbReference type="Araport" id="AT1G34065"/>
<dbReference type="TAIR" id="AT1G34065">
    <property type="gene designation" value="SAMC2"/>
</dbReference>
<dbReference type="eggNOG" id="KOG0768">
    <property type="taxonomic scope" value="Eukaryota"/>
</dbReference>
<dbReference type="HOGENOM" id="CLU_015166_3_0_1"/>
<dbReference type="InParanoid" id="F4HT41"/>
<dbReference type="PRO" id="PR:F4HT41"/>
<dbReference type="Proteomes" id="UP000006548">
    <property type="component" value="Chromosome 1"/>
</dbReference>
<dbReference type="ExpressionAtlas" id="F4HT41">
    <property type="expression patterns" value="baseline and differential"/>
</dbReference>
<dbReference type="GO" id="GO:0031969">
    <property type="term" value="C:chloroplast membrane"/>
    <property type="evidence" value="ECO:0007669"/>
    <property type="project" value="UniProtKB-SubCell"/>
</dbReference>
<dbReference type="GO" id="GO:0055085">
    <property type="term" value="P:transmembrane transport"/>
    <property type="evidence" value="ECO:0007669"/>
    <property type="project" value="InterPro"/>
</dbReference>
<dbReference type="FunFam" id="1.50.40.10:FF:000038">
    <property type="entry name" value="S-adenosylmethionine carrier 1 chloroplastic/mitochondrial"/>
    <property type="match status" value="1"/>
</dbReference>
<dbReference type="Gene3D" id="1.50.40.10">
    <property type="entry name" value="Mitochondrial carrier domain"/>
    <property type="match status" value="1"/>
</dbReference>
<dbReference type="InterPro" id="IPR002067">
    <property type="entry name" value="Mit_carrier"/>
</dbReference>
<dbReference type="InterPro" id="IPR018108">
    <property type="entry name" value="Mitochondrial_sb/sol_carrier"/>
</dbReference>
<dbReference type="InterPro" id="IPR023395">
    <property type="entry name" value="Mt_carrier_dom_sf"/>
</dbReference>
<dbReference type="PANTHER" id="PTHR45667">
    <property type="entry name" value="S-ADENOSYLMETHIONINE MITOCHONDRIAL CARRIER PROTEIN"/>
    <property type="match status" value="1"/>
</dbReference>
<dbReference type="Pfam" id="PF00153">
    <property type="entry name" value="Mito_carr"/>
    <property type="match status" value="3"/>
</dbReference>
<dbReference type="PRINTS" id="PR00926">
    <property type="entry name" value="MITOCARRIER"/>
</dbReference>
<dbReference type="SUPFAM" id="SSF103506">
    <property type="entry name" value="Mitochondrial carrier"/>
    <property type="match status" value="1"/>
</dbReference>
<dbReference type="PROSITE" id="PS50920">
    <property type="entry name" value="SOLCAR"/>
    <property type="match status" value="3"/>
</dbReference>
<sequence>MTKALSGFCCSLSLSTLVRSSSSHMDSDIVSSSIDRSQTAMPDALAFKSINDPIKNQINSCAAICVKQDDPCHFLRVLYESLITGGLAGVVVEAALYPIDTIKTRIQVARDGGKIIWKGLYSGLGGNLVGVLPASALFFGVYEPTKQKLLKVLPDNLSAVAHLAAGALGGAVSSIVRVPTEVVKQRMQTGQFVSAPDAVRLIIAKEGFGGMYAGYGSFLLRDLPFDALQFCVYEQLRIGYKLAARRDLNDPENAMIGAFAGAVTGVLTTPLDVIKTRLMVQGSGTQYKGVSDCIKTIIREEGSSALWKGMGPRVLWIGIGGSIFFGVLEKTKQILSERSQKSHNA</sequence>
<name>SAMC2_ARATH</name>
<protein>
    <recommendedName>
        <fullName>Probable S-adenosylmethionine carrier 2, chloroplastic</fullName>
    </recommendedName>
</protein>
<keyword id="KW-0150">Chloroplast</keyword>
<keyword id="KW-0472">Membrane</keyword>
<keyword id="KW-0934">Plastid</keyword>
<keyword id="KW-1185">Reference proteome</keyword>
<keyword id="KW-0677">Repeat</keyword>
<keyword id="KW-0949">S-adenosyl-L-methionine</keyword>
<keyword id="KW-0809">Transit peptide</keyword>
<keyword id="KW-0812">Transmembrane</keyword>
<keyword id="KW-1133">Transmembrane helix</keyword>
<keyword id="KW-0813">Transport</keyword>
<feature type="transit peptide" description="Chloroplast" evidence="1">
    <location>
        <begin position="1"/>
        <end position="31"/>
    </location>
</feature>
<feature type="chain" id="PRO_0000424772" description="Probable S-adenosylmethionine carrier 2, chloroplastic">
    <location>
        <begin position="32"/>
        <end position="345"/>
    </location>
</feature>
<feature type="transmembrane region" description="Helical" evidence="1">
    <location>
        <begin position="82"/>
        <end position="102"/>
    </location>
</feature>
<feature type="transmembrane region" description="Helical" evidence="1">
    <location>
        <begin position="121"/>
        <end position="141"/>
    </location>
</feature>
<feature type="transmembrane region" description="Helical" evidence="1">
    <location>
        <begin position="156"/>
        <end position="176"/>
    </location>
</feature>
<feature type="transmembrane region" description="Helical" evidence="1">
    <location>
        <begin position="254"/>
        <end position="274"/>
    </location>
</feature>
<feature type="transmembrane region" description="Helical" evidence="1">
    <location>
        <begin position="309"/>
        <end position="329"/>
    </location>
</feature>
<feature type="repeat" description="Solcar 1">
    <location>
        <begin position="76"/>
        <end position="148"/>
    </location>
</feature>
<feature type="repeat" description="Solcar 2">
    <location>
        <begin position="157"/>
        <end position="239"/>
    </location>
</feature>
<feature type="repeat" description="Solcar 3">
    <location>
        <begin position="252"/>
        <end position="334"/>
    </location>
</feature>
<proteinExistence type="evidence at transcript level"/>
<reference key="1">
    <citation type="journal article" date="2000" name="Nature">
        <title>Sequence and analysis of chromosome 1 of the plant Arabidopsis thaliana.</title>
        <authorList>
            <person name="Theologis A."/>
            <person name="Ecker J.R."/>
            <person name="Palm C.J."/>
            <person name="Federspiel N.A."/>
            <person name="Kaul S."/>
            <person name="White O."/>
            <person name="Alonso J."/>
            <person name="Altafi H."/>
            <person name="Araujo R."/>
            <person name="Bowman C.L."/>
            <person name="Brooks S.Y."/>
            <person name="Buehler E."/>
            <person name="Chan A."/>
            <person name="Chao Q."/>
            <person name="Chen H."/>
            <person name="Cheuk R.F."/>
            <person name="Chin C.W."/>
            <person name="Chung M.K."/>
            <person name="Conn L."/>
            <person name="Conway A.B."/>
            <person name="Conway A.R."/>
            <person name="Creasy T.H."/>
            <person name="Dewar K."/>
            <person name="Dunn P."/>
            <person name="Etgu P."/>
            <person name="Feldblyum T.V."/>
            <person name="Feng J.-D."/>
            <person name="Fong B."/>
            <person name="Fujii C.Y."/>
            <person name="Gill J.E."/>
            <person name="Goldsmith A.D."/>
            <person name="Haas B."/>
            <person name="Hansen N.F."/>
            <person name="Hughes B."/>
            <person name="Huizar L."/>
            <person name="Hunter J.L."/>
            <person name="Jenkins J."/>
            <person name="Johnson-Hopson C."/>
            <person name="Khan S."/>
            <person name="Khaykin E."/>
            <person name="Kim C.J."/>
            <person name="Koo H.L."/>
            <person name="Kremenetskaia I."/>
            <person name="Kurtz D.B."/>
            <person name="Kwan A."/>
            <person name="Lam B."/>
            <person name="Langin-Hooper S."/>
            <person name="Lee A."/>
            <person name="Lee J.M."/>
            <person name="Lenz C.A."/>
            <person name="Li J.H."/>
            <person name="Li Y.-P."/>
            <person name="Lin X."/>
            <person name="Liu S.X."/>
            <person name="Liu Z.A."/>
            <person name="Luros J.S."/>
            <person name="Maiti R."/>
            <person name="Marziali A."/>
            <person name="Militscher J."/>
            <person name="Miranda M."/>
            <person name="Nguyen M."/>
            <person name="Nierman W.C."/>
            <person name="Osborne B.I."/>
            <person name="Pai G."/>
            <person name="Peterson J."/>
            <person name="Pham P.K."/>
            <person name="Rizzo M."/>
            <person name="Rooney T."/>
            <person name="Rowley D."/>
            <person name="Sakano H."/>
            <person name="Salzberg S.L."/>
            <person name="Schwartz J.R."/>
            <person name="Shinn P."/>
            <person name="Southwick A.M."/>
            <person name="Sun H."/>
            <person name="Tallon L.J."/>
            <person name="Tambunga G."/>
            <person name="Toriumi M.J."/>
            <person name="Town C.D."/>
            <person name="Utterback T."/>
            <person name="Van Aken S."/>
            <person name="Vaysberg M."/>
            <person name="Vysotskaia V.S."/>
            <person name="Walker M."/>
            <person name="Wu D."/>
            <person name="Yu G."/>
            <person name="Fraser C.M."/>
            <person name="Venter J.C."/>
            <person name="Davis R.W."/>
        </authorList>
    </citation>
    <scope>NUCLEOTIDE SEQUENCE [LARGE SCALE GENOMIC DNA]</scope>
    <source>
        <strain>cv. Columbia</strain>
    </source>
</reference>
<reference key="2">
    <citation type="journal article" date="2017" name="Plant J.">
        <title>Araport11: a complete reannotation of the Arabidopsis thaliana reference genome.</title>
        <authorList>
            <person name="Cheng C.Y."/>
            <person name="Krishnakumar V."/>
            <person name="Chan A.P."/>
            <person name="Thibaud-Nissen F."/>
            <person name="Schobel S."/>
            <person name="Town C.D."/>
        </authorList>
    </citation>
    <scope>GENOME REANNOTATION</scope>
    <source>
        <strain>cv. Columbia</strain>
    </source>
</reference>
<reference key="3">
    <citation type="submission" date="2005-05" db="EMBL/GenBank/DDBJ databases">
        <title>Arabidopsis cDNA clones.</title>
        <authorList>
            <person name="Shinn P."/>
            <person name="Chen H."/>
            <person name="Cheuk R."/>
            <person name="Kim C.J."/>
            <person name="Ecker J.R."/>
        </authorList>
    </citation>
    <scope>NUCLEOTIDE SEQUENCE [LARGE SCALE MRNA] OF 14-345</scope>
</reference>
<reference key="4">
    <citation type="journal article" date="2006" name="Plant Physiol.">
        <title>Molecular identification of an Arabidopsis S-adenosylmethionine transporter. Analysis of organ distribution, bacterial expression, reconstitution into liposomes, and functional characterization.</title>
        <authorList>
            <person name="Palmieri L."/>
            <person name="Arrigoni R."/>
            <person name="Blanco E."/>
            <person name="Carrari F."/>
            <person name="Zanor M.I."/>
            <person name="Studart-Guimareas C."/>
            <person name="Fernie A.R."/>
            <person name="Palmieri F."/>
        </authorList>
    </citation>
    <scope>NUCLEOTIDE SEQUENCE [MRNA] OF 25-345</scope>
    <scope>TISSUE SPECIFICITY</scope>
    <source>
        <strain>cv. Landsberg erecta</strain>
    </source>
</reference>
<reference key="5">
    <citation type="journal article" date="2006" name="Plant Cell">
        <title>Arabidopsis SAMT1 defines a plastid transporter regulating plastid biogenesis and plant development.</title>
        <authorList>
            <person name="Bouvier F."/>
            <person name="Linka N."/>
            <person name="Isner J.C."/>
            <person name="Mutterer J."/>
            <person name="Weber A.P.M."/>
            <person name="Camara B."/>
        </authorList>
    </citation>
    <scope>IDENTIFICATION</scope>
</reference>
<organism>
    <name type="scientific">Arabidopsis thaliana</name>
    <name type="common">Mouse-ear cress</name>
    <dbReference type="NCBI Taxonomy" id="3702"/>
    <lineage>
        <taxon>Eukaryota</taxon>
        <taxon>Viridiplantae</taxon>
        <taxon>Streptophyta</taxon>
        <taxon>Embryophyta</taxon>
        <taxon>Tracheophyta</taxon>
        <taxon>Spermatophyta</taxon>
        <taxon>Magnoliopsida</taxon>
        <taxon>eudicotyledons</taxon>
        <taxon>Gunneridae</taxon>
        <taxon>Pentapetalae</taxon>
        <taxon>rosids</taxon>
        <taxon>malvids</taxon>
        <taxon>Brassicales</taxon>
        <taxon>Brassicaceae</taxon>
        <taxon>Camelineae</taxon>
        <taxon>Arabidopsis</taxon>
    </lineage>
</organism>
<accession>F4HT41</accession>
<accession>Q500W9</accession>
<accession>Q9FX15</accession>